<protein>
    <recommendedName>
        <fullName evidence="1">Zinc transporter ZupT</fullName>
    </recommendedName>
</protein>
<evidence type="ECO:0000255" key="1">
    <source>
        <dbReference type="HAMAP-Rule" id="MF_00548"/>
    </source>
</evidence>
<name>ZUPT_STRM5</name>
<dbReference type="EMBL" id="CP001111">
    <property type="protein sequence ID" value="ACF52376.1"/>
    <property type="molecule type" value="Genomic_DNA"/>
</dbReference>
<dbReference type="RefSeq" id="WP_006377819.1">
    <property type="nucleotide sequence ID" value="NC_011071.1"/>
</dbReference>
<dbReference type="SMR" id="B4SPV6"/>
<dbReference type="STRING" id="391008.Smal_2676"/>
<dbReference type="KEGG" id="smt:Smal_2676"/>
<dbReference type="eggNOG" id="COG0428">
    <property type="taxonomic scope" value="Bacteria"/>
</dbReference>
<dbReference type="HOGENOM" id="CLU_015114_1_3_6"/>
<dbReference type="OrthoDB" id="9787346at2"/>
<dbReference type="Proteomes" id="UP000001867">
    <property type="component" value="Chromosome"/>
</dbReference>
<dbReference type="GO" id="GO:0005886">
    <property type="term" value="C:plasma membrane"/>
    <property type="evidence" value="ECO:0007669"/>
    <property type="project" value="UniProtKB-SubCell"/>
</dbReference>
<dbReference type="GO" id="GO:0046872">
    <property type="term" value="F:metal ion binding"/>
    <property type="evidence" value="ECO:0007669"/>
    <property type="project" value="UniProtKB-KW"/>
</dbReference>
<dbReference type="GO" id="GO:0005385">
    <property type="term" value="F:zinc ion transmembrane transporter activity"/>
    <property type="evidence" value="ECO:0007669"/>
    <property type="project" value="UniProtKB-UniRule"/>
</dbReference>
<dbReference type="HAMAP" id="MF_00548">
    <property type="entry name" value="ZupT"/>
    <property type="match status" value="1"/>
</dbReference>
<dbReference type="InterPro" id="IPR003689">
    <property type="entry name" value="ZIP"/>
</dbReference>
<dbReference type="InterPro" id="IPR023498">
    <property type="entry name" value="Zn_transptr_ZupT"/>
</dbReference>
<dbReference type="NCBIfam" id="NF003243">
    <property type="entry name" value="PRK04201.1"/>
    <property type="match status" value="1"/>
</dbReference>
<dbReference type="PANTHER" id="PTHR11040:SF205">
    <property type="entry name" value="ZINC TRANSPORTER ZUPT"/>
    <property type="match status" value="1"/>
</dbReference>
<dbReference type="PANTHER" id="PTHR11040">
    <property type="entry name" value="ZINC/IRON TRANSPORTER"/>
    <property type="match status" value="1"/>
</dbReference>
<dbReference type="Pfam" id="PF02535">
    <property type="entry name" value="Zip"/>
    <property type="match status" value="1"/>
</dbReference>
<comment type="function">
    <text evidence="1">Mediates zinc uptake. May also transport other divalent cations.</text>
</comment>
<comment type="catalytic activity">
    <reaction evidence="1">
        <text>Zn(2+)(in) = Zn(2+)(out)</text>
        <dbReference type="Rhea" id="RHEA:29351"/>
        <dbReference type="ChEBI" id="CHEBI:29105"/>
    </reaction>
</comment>
<comment type="subcellular location">
    <subcellularLocation>
        <location evidence="1">Cell inner membrane</location>
        <topology evidence="1">Multi-pass membrane protein</topology>
    </subcellularLocation>
</comment>
<comment type="similarity">
    <text evidence="1">Belongs to the ZIP transporter (TC 2.A.5) family. ZupT subfamily.</text>
</comment>
<accession>B4SPV6</accession>
<gene>
    <name evidence="1" type="primary">zupT</name>
    <name type="ordered locus">Smal_2676</name>
</gene>
<proteinExistence type="inferred from homology"/>
<feature type="chain" id="PRO_1000128968" description="Zinc transporter ZupT">
    <location>
        <begin position="1"/>
        <end position="269"/>
    </location>
</feature>
<feature type="transmembrane region" description="Helical" evidence="1">
    <location>
        <begin position="11"/>
        <end position="31"/>
    </location>
</feature>
<feature type="transmembrane region" description="Helical" evidence="1">
    <location>
        <begin position="40"/>
        <end position="60"/>
    </location>
</feature>
<feature type="transmembrane region" description="Helical" evidence="1">
    <location>
        <begin position="80"/>
        <end position="100"/>
    </location>
</feature>
<feature type="transmembrane region" description="Helical" evidence="1">
    <location>
        <begin position="125"/>
        <end position="145"/>
    </location>
</feature>
<feature type="transmembrane region" description="Helical" evidence="1">
    <location>
        <begin position="158"/>
        <end position="178"/>
    </location>
</feature>
<feature type="transmembrane region" description="Helical" evidence="1">
    <location>
        <begin position="187"/>
        <end position="207"/>
    </location>
</feature>
<feature type="transmembrane region" description="Helical" evidence="1">
    <location>
        <begin position="217"/>
        <end position="237"/>
    </location>
</feature>
<feature type="transmembrane region" description="Helical" evidence="1">
    <location>
        <begin position="249"/>
        <end position="269"/>
    </location>
</feature>
<feature type="binding site" description="M2 metal binding site" evidence="1">
    <location>
        <position position="136"/>
    </location>
    <ligand>
        <name>Fe(2+)</name>
        <dbReference type="ChEBI" id="CHEBI:29033"/>
    </ligand>
</feature>
<feature type="binding site" description="M2 metal binding site" evidence="1">
    <location>
        <position position="139"/>
    </location>
    <ligand>
        <name>Fe(2+)</name>
        <dbReference type="ChEBI" id="CHEBI:29033"/>
    </ligand>
</feature>
<feature type="binding site" description="M1 metal binding site" evidence="1">
    <location>
        <position position="139"/>
    </location>
    <ligand>
        <name>Zn(2+)</name>
        <dbReference type="ChEBI" id="CHEBI:29105"/>
    </ligand>
</feature>
<feature type="binding site" description="M1 metal binding site" evidence="1">
    <location>
        <position position="164"/>
    </location>
    <ligand>
        <name>Zn(2+)</name>
        <dbReference type="ChEBI" id="CHEBI:29105"/>
    </ligand>
</feature>
<feature type="binding site" description="M2 metal binding site" evidence="1">
    <location>
        <position position="165"/>
    </location>
    <ligand>
        <name>Fe(2+)</name>
        <dbReference type="ChEBI" id="CHEBI:29033"/>
    </ligand>
</feature>
<feature type="binding site" description="M2 metal binding site" evidence="1">
    <location>
        <position position="168"/>
    </location>
    <ligand>
        <name>Fe(2+)</name>
        <dbReference type="ChEBI" id="CHEBI:29033"/>
    </ligand>
</feature>
<feature type="binding site" description="M1 metal binding site" evidence="1">
    <location>
        <position position="168"/>
    </location>
    <ligand>
        <name>Zn(2+)</name>
        <dbReference type="ChEBI" id="CHEBI:29105"/>
    </ligand>
</feature>
<feature type="binding site" description="M2 metal binding site" evidence="1">
    <location>
        <position position="197"/>
    </location>
    <ligand>
        <name>Fe(2+)</name>
        <dbReference type="ChEBI" id="CHEBI:29033"/>
    </ligand>
</feature>
<reference key="1">
    <citation type="submission" date="2008-06" db="EMBL/GenBank/DDBJ databases">
        <title>Complete sequence of Stenotrophomonas maltophilia R551-3.</title>
        <authorList>
            <consortium name="US DOE Joint Genome Institute"/>
            <person name="Lucas S."/>
            <person name="Copeland A."/>
            <person name="Lapidus A."/>
            <person name="Glavina del Rio T."/>
            <person name="Dalin E."/>
            <person name="Tice H."/>
            <person name="Pitluck S."/>
            <person name="Chain P."/>
            <person name="Malfatti S."/>
            <person name="Shin M."/>
            <person name="Vergez L."/>
            <person name="Lang D."/>
            <person name="Schmutz J."/>
            <person name="Larimer F."/>
            <person name="Land M."/>
            <person name="Hauser L."/>
            <person name="Kyrpides N."/>
            <person name="Mikhailova N."/>
            <person name="Taghavi S."/>
            <person name="Monchy S."/>
            <person name="Newman L."/>
            <person name="Vangronsveld J."/>
            <person name="van der Lelie D."/>
            <person name="Richardson P."/>
        </authorList>
    </citation>
    <scope>NUCLEOTIDE SEQUENCE [LARGE SCALE GENOMIC DNA]</scope>
    <source>
        <strain>R551-3</strain>
    </source>
</reference>
<sequence length="269" mass="28728">MLHIPPENVWIALAVTLAAGLATAIGSLLVLFSRRPNPRLLAFGLAFAGGAMVYVSLSEILNKSIASFALAYGERTGFTYGTLAFLLGVIVIVLIDHFIPNPHDSLDKQDPAFRENSREYLKRVALLTSIAITAHNFPEGLATFFATLESPSVGMPLAFAIAIHNIPEGIAIAVPVYFATQNKFYAFSASLLSGLAEPVGAALGYWLLSGSLSHATFGWVFGLIAGVMVFLALDELLPAAKRYAKGHETVYGLVAGMGTLAISLVLFKW</sequence>
<keyword id="KW-0997">Cell inner membrane</keyword>
<keyword id="KW-1003">Cell membrane</keyword>
<keyword id="KW-0406">Ion transport</keyword>
<keyword id="KW-0408">Iron</keyword>
<keyword id="KW-0472">Membrane</keyword>
<keyword id="KW-0479">Metal-binding</keyword>
<keyword id="KW-0812">Transmembrane</keyword>
<keyword id="KW-1133">Transmembrane helix</keyword>
<keyword id="KW-0813">Transport</keyword>
<keyword id="KW-0862">Zinc</keyword>
<keyword id="KW-0864">Zinc transport</keyword>
<organism>
    <name type="scientific">Stenotrophomonas maltophilia (strain R551-3)</name>
    <dbReference type="NCBI Taxonomy" id="391008"/>
    <lineage>
        <taxon>Bacteria</taxon>
        <taxon>Pseudomonadati</taxon>
        <taxon>Pseudomonadota</taxon>
        <taxon>Gammaproteobacteria</taxon>
        <taxon>Lysobacterales</taxon>
        <taxon>Lysobacteraceae</taxon>
        <taxon>Stenotrophomonas</taxon>
        <taxon>Stenotrophomonas maltophilia group</taxon>
    </lineage>
</organism>